<comment type="function">
    <text evidence="1">Binds as a heterodimer with protein bS6 to the central domain of the 16S rRNA, where it helps stabilize the platform of the 30S subunit.</text>
</comment>
<comment type="subunit">
    <text evidence="1">Part of the 30S ribosomal subunit. Forms a tight heterodimer with protein bS6.</text>
</comment>
<comment type="similarity">
    <text evidence="1">Belongs to the bacterial ribosomal protein bS18 family.</text>
</comment>
<name>RS18_BACC2</name>
<dbReference type="EMBL" id="CP001186">
    <property type="protein sequence ID" value="ACK93199.1"/>
    <property type="molecule type" value="Genomic_DNA"/>
</dbReference>
<dbReference type="RefSeq" id="WP_000918873.1">
    <property type="nucleotide sequence ID" value="NC_011772.1"/>
</dbReference>
<dbReference type="SMR" id="B7IS16"/>
<dbReference type="GeneID" id="93005650"/>
<dbReference type="KEGG" id="bcg:BCG9842_B5336"/>
<dbReference type="HOGENOM" id="CLU_148710_2_2_9"/>
<dbReference type="Proteomes" id="UP000006744">
    <property type="component" value="Chromosome"/>
</dbReference>
<dbReference type="GO" id="GO:0022627">
    <property type="term" value="C:cytosolic small ribosomal subunit"/>
    <property type="evidence" value="ECO:0007669"/>
    <property type="project" value="TreeGrafter"/>
</dbReference>
<dbReference type="GO" id="GO:0070181">
    <property type="term" value="F:small ribosomal subunit rRNA binding"/>
    <property type="evidence" value="ECO:0007669"/>
    <property type="project" value="TreeGrafter"/>
</dbReference>
<dbReference type="GO" id="GO:0003735">
    <property type="term" value="F:structural constituent of ribosome"/>
    <property type="evidence" value="ECO:0007669"/>
    <property type="project" value="InterPro"/>
</dbReference>
<dbReference type="GO" id="GO:0006412">
    <property type="term" value="P:translation"/>
    <property type="evidence" value="ECO:0007669"/>
    <property type="project" value="UniProtKB-UniRule"/>
</dbReference>
<dbReference type="FunFam" id="4.10.640.10:FF:000003">
    <property type="entry name" value="30S ribosomal protein S18"/>
    <property type="match status" value="1"/>
</dbReference>
<dbReference type="Gene3D" id="4.10.640.10">
    <property type="entry name" value="Ribosomal protein S18"/>
    <property type="match status" value="1"/>
</dbReference>
<dbReference type="HAMAP" id="MF_00270">
    <property type="entry name" value="Ribosomal_bS18"/>
    <property type="match status" value="1"/>
</dbReference>
<dbReference type="InterPro" id="IPR001648">
    <property type="entry name" value="Ribosomal_bS18"/>
</dbReference>
<dbReference type="InterPro" id="IPR018275">
    <property type="entry name" value="Ribosomal_bS18_CS"/>
</dbReference>
<dbReference type="InterPro" id="IPR036870">
    <property type="entry name" value="Ribosomal_bS18_sf"/>
</dbReference>
<dbReference type="NCBIfam" id="TIGR00165">
    <property type="entry name" value="S18"/>
    <property type="match status" value="1"/>
</dbReference>
<dbReference type="PANTHER" id="PTHR13479">
    <property type="entry name" value="30S RIBOSOMAL PROTEIN S18"/>
    <property type="match status" value="1"/>
</dbReference>
<dbReference type="PANTHER" id="PTHR13479:SF40">
    <property type="entry name" value="SMALL RIBOSOMAL SUBUNIT PROTEIN BS18M"/>
    <property type="match status" value="1"/>
</dbReference>
<dbReference type="Pfam" id="PF01084">
    <property type="entry name" value="Ribosomal_S18"/>
    <property type="match status" value="1"/>
</dbReference>
<dbReference type="PRINTS" id="PR00974">
    <property type="entry name" value="RIBOSOMALS18"/>
</dbReference>
<dbReference type="SUPFAM" id="SSF46911">
    <property type="entry name" value="Ribosomal protein S18"/>
    <property type="match status" value="1"/>
</dbReference>
<dbReference type="PROSITE" id="PS00057">
    <property type="entry name" value="RIBOSOMAL_S18"/>
    <property type="match status" value="1"/>
</dbReference>
<reference key="1">
    <citation type="submission" date="2008-10" db="EMBL/GenBank/DDBJ databases">
        <title>Genome sequence of Bacillus cereus G9842.</title>
        <authorList>
            <person name="Dodson R.J."/>
            <person name="Durkin A.S."/>
            <person name="Rosovitz M.J."/>
            <person name="Rasko D.A."/>
            <person name="Hoffmaster A."/>
            <person name="Ravel J."/>
            <person name="Sutton G."/>
        </authorList>
    </citation>
    <scope>NUCLEOTIDE SEQUENCE [LARGE SCALE GENOMIC DNA]</scope>
    <source>
        <strain>G9842</strain>
    </source>
</reference>
<protein>
    <recommendedName>
        <fullName evidence="1">Small ribosomal subunit protein bS18</fullName>
    </recommendedName>
    <alternativeName>
        <fullName evidence="2">30S ribosomal protein S18</fullName>
    </alternativeName>
</protein>
<keyword id="KW-0687">Ribonucleoprotein</keyword>
<keyword id="KW-0689">Ribosomal protein</keyword>
<keyword id="KW-0694">RNA-binding</keyword>
<keyword id="KW-0699">rRNA-binding</keyword>
<accession>B7IS16</accession>
<sequence length="77" mass="8813">MAGRKGGRAKRRKVCFFTANGITRIDYKDVDLLKRFVSERGKILPRRVTGTSAKYQRKLTVAIKRARQMALLPYVGE</sequence>
<proteinExistence type="inferred from homology"/>
<feature type="chain" id="PRO_1000119271" description="Small ribosomal subunit protein bS18">
    <location>
        <begin position="1"/>
        <end position="77"/>
    </location>
</feature>
<gene>
    <name evidence="1" type="primary">rpsR</name>
    <name type="ordered locus">BCG9842_B5336</name>
</gene>
<organism>
    <name type="scientific">Bacillus cereus (strain G9842)</name>
    <dbReference type="NCBI Taxonomy" id="405531"/>
    <lineage>
        <taxon>Bacteria</taxon>
        <taxon>Bacillati</taxon>
        <taxon>Bacillota</taxon>
        <taxon>Bacilli</taxon>
        <taxon>Bacillales</taxon>
        <taxon>Bacillaceae</taxon>
        <taxon>Bacillus</taxon>
        <taxon>Bacillus cereus group</taxon>
    </lineage>
</organism>
<evidence type="ECO:0000255" key="1">
    <source>
        <dbReference type="HAMAP-Rule" id="MF_00270"/>
    </source>
</evidence>
<evidence type="ECO:0000305" key="2"/>